<name>FLUC_CHLTE</name>
<comment type="function">
    <text evidence="1">Fluoride-specific ion channel. Important for reducing fluoride concentration in the cell, thus reducing its toxicity.</text>
</comment>
<comment type="catalytic activity">
    <reaction evidence="1">
        <text>fluoride(in) = fluoride(out)</text>
        <dbReference type="Rhea" id="RHEA:76159"/>
        <dbReference type="ChEBI" id="CHEBI:17051"/>
    </reaction>
    <physiologicalReaction direction="left-to-right" evidence="1">
        <dbReference type="Rhea" id="RHEA:76160"/>
    </physiologicalReaction>
</comment>
<comment type="activity regulation">
    <text evidence="1">Na(+) is not transported, but it plays an essential structural role and its presence is essential for fluoride channel function.</text>
</comment>
<comment type="subcellular location">
    <subcellularLocation>
        <location evidence="1">Cell inner membrane</location>
        <topology evidence="1">Multi-pass membrane protein</topology>
    </subcellularLocation>
</comment>
<comment type="similarity">
    <text evidence="1">Belongs to the fluoride channel Fluc/FEX (TC 1.A.43) family.</text>
</comment>
<accession>Q8KAQ4</accession>
<proteinExistence type="inferred from homology"/>
<feature type="chain" id="PRO_0000110084" description="Fluoride-specific ion channel FluC">
    <location>
        <begin position="1"/>
        <end position="126"/>
    </location>
</feature>
<feature type="transmembrane region" description="Helical" evidence="1">
    <location>
        <begin position="6"/>
        <end position="26"/>
    </location>
</feature>
<feature type="transmembrane region" description="Helical" evidence="1">
    <location>
        <begin position="32"/>
        <end position="52"/>
    </location>
</feature>
<feature type="transmembrane region" description="Helical" evidence="1">
    <location>
        <begin position="68"/>
        <end position="90"/>
    </location>
</feature>
<feature type="transmembrane region" description="Helical" evidence="1">
    <location>
        <begin position="102"/>
        <end position="122"/>
    </location>
</feature>
<feature type="binding site" evidence="1">
    <location>
        <position position="76"/>
    </location>
    <ligand>
        <name>Na(+)</name>
        <dbReference type="ChEBI" id="CHEBI:29101"/>
        <note>structural</note>
    </ligand>
</feature>
<feature type="binding site" evidence="1">
    <location>
        <position position="79"/>
    </location>
    <ligand>
        <name>Na(+)</name>
        <dbReference type="ChEBI" id="CHEBI:29101"/>
        <note>structural</note>
    </ligand>
</feature>
<keyword id="KW-0997">Cell inner membrane</keyword>
<keyword id="KW-1003">Cell membrane</keyword>
<keyword id="KW-0407">Ion channel</keyword>
<keyword id="KW-0406">Ion transport</keyword>
<keyword id="KW-0472">Membrane</keyword>
<keyword id="KW-0479">Metal-binding</keyword>
<keyword id="KW-1185">Reference proteome</keyword>
<keyword id="KW-0915">Sodium</keyword>
<keyword id="KW-0812">Transmembrane</keyword>
<keyword id="KW-1133">Transmembrane helix</keyword>
<keyword id="KW-0813">Transport</keyword>
<reference key="1">
    <citation type="journal article" date="2002" name="Proc. Natl. Acad. Sci. U.S.A.">
        <title>The complete genome sequence of Chlorobium tepidum TLS, a photosynthetic, anaerobic, green-sulfur bacterium.</title>
        <authorList>
            <person name="Eisen J.A."/>
            <person name="Nelson K.E."/>
            <person name="Paulsen I.T."/>
            <person name="Heidelberg J.F."/>
            <person name="Wu M."/>
            <person name="Dodson R.J."/>
            <person name="DeBoy R.T."/>
            <person name="Gwinn M.L."/>
            <person name="Nelson W.C."/>
            <person name="Haft D.H."/>
            <person name="Hickey E.K."/>
            <person name="Peterson J.D."/>
            <person name="Durkin A.S."/>
            <person name="Kolonay J.F."/>
            <person name="Yang F."/>
            <person name="Holt I.E."/>
            <person name="Umayam L.A."/>
            <person name="Mason T.M."/>
            <person name="Brenner M."/>
            <person name="Shea T.P."/>
            <person name="Parksey D.S."/>
            <person name="Nierman W.C."/>
            <person name="Feldblyum T.V."/>
            <person name="Hansen C.L."/>
            <person name="Craven M.B."/>
            <person name="Radune D."/>
            <person name="Vamathevan J.J."/>
            <person name="Khouri H.M."/>
            <person name="White O."/>
            <person name="Gruber T.M."/>
            <person name="Ketchum K.A."/>
            <person name="Venter J.C."/>
            <person name="Tettelin H."/>
            <person name="Bryant D.A."/>
            <person name="Fraser C.M."/>
        </authorList>
    </citation>
    <scope>NUCLEOTIDE SEQUENCE [LARGE SCALE GENOMIC DNA]</scope>
    <source>
        <strain>ATCC 49652 / DSM 12025 / NBRC 103806 / TLS</strain>
    </source>
</reference>
<dbReference type="EMBL" id="AE006470">
    <property type="protein sequence ID" value="AAM73318.1"/>
    <property type="molecule type" value="Genomic_DNA"/>
</dbReference>
<dbReference type="RefSeq" id="NP_662976.1">
    <property type="nucleotide sequence ID" value="NC_002932.3"/>
</dbReference>
<dbReference type="SMR" id="Q8KAQ4"/>
<dbReference type="STRING" id="194439.CT2102"/>
<dbReference type="EnsemblBacteria" id="AAM73318">
    <property type="protein sequence ID" value="AAM73318"/>
    <property type="gene ID" value="CT2102"/>
</dbReference>
<dbReference type="KEGG" id="cte:CT2102"/>
<dbReference type="PATRIC" id="fig|194439.7.peg.1905"/>
<dbReference type="eggNOG" id="COG0239">
    <property type="taxonomic scope" value="Bacteria"/>
</dbReference>
<dbReference type="HOGENOM" id="CLU_114342_3_0_10"/>
<dbReference type="OrthoDB" id="9815830at2"/>
<dbReference type="Proteomes" id="UP000001007">
    <property type="component" value="Chromosome"/>
</dbReference>
<dbReference type="GO" id="GO:0005886">
    <property type="term" value="C:plasma membrane"/>
    <property type="evidence" value="ECO:0007669"/>
    <property type="project" value="UniProtKB-SubCell"/>
</dbReference>
<dbReference type="GO" id="GO:0062054">
    <property type="term" value="F:fluoride channel activity"/>
    <property type="evidence" value="ECO:0007669"/>
    <property type="project" value="UniProtKB-UniRule"/>
</dbReference>
<dbReference type="GO" id="GO:0046872">
    <property type="term" value="F:metal ion binding"/>
    <property type="evidence" value="ECO:0007669"/>
    <property type="project" value="UniProtKB-KW"/>
</dbReference>
<dbReference type="GO" id="GO:0140114">
    <property type="term" value="P:cellular detoxification of fluoride"/>
    <property type="evidence" value="ECO:0007669"/>
    <property type="project" value="UniProtKB-UniRule"/>
</dbReference>
<dbReference type="HAMAP" id="MF_00454">
    <property type="entry name" value="FluC"/>
    <property type="match status" value="1"/>
</dbReference>
<dbReference type="InterPro" id="IPR003691">
    <property type="entry name" value="FluC"/>
</dbReference>
<dbReference type="NCBIfam" id="TIGR00494">
    <property type="entry name" value="crcB"/>
    <property type="match status" value="1"/>
</dbReference>
<dbReference type="PANTHER" id="PTHR28259">
    <property type="entry name" value="FLUORIDE EXPORT PROTEIN 1-RELATED"/>
    <property type="match status" value="1"/>
</dbReference>
<dbReference type="PANTHER" id="PTHR28259:SF1">
    <property type="entry name" value="FLUORIDE EXPORT PROTEIN 1-RELATED"/>
    <property type="match status" value="1"/>
</dbReference>
<dbReference type="Pfam" id="PF02537">
    <property type="entry name" value="CRCB"/>
    <property type="match status" value="1"/>
</dbReference>
<organism>
    <name type="scientific">Chlorobaculum tepidum (strain ATCC 49652 / DSM 12025 / NBRC 103806 / TLS)</name>
    <name type="common">Chlorobium tepidum</name>
    <dbReference type="NCBI Taxonomy" id="194439"/>
    <lineage>
        <taxon>Bacteria</taxon>
        <taxon>Pseudomonadati</taxon>
        <taxon>Chlorobiota</taxon>
        <taxon>Chlorobiia</taxon>
        <taxon>Chlorobiales</taxon>
        <taxon>Chlorobiaceae</taxon>
        <taxon>Chlorobaculum</taxon>
    </lineage>
</organism>
<evidence type="ECO:0000255" key="1">
    <source>
        <dbReference type="HAMAP-Rule" id="MF_00454"/>
    </source>
</evidence>
<sequence>MVMKNVLLVGAGGFAGSVARYLVALAVPFSGTGFPFATFAVNLLGSFLIGFISELALSTTLLSPEARLLLTTGFCGGFTTFSTAMYETGGLMRDGEALYASLYVAGSLAGGLACLFSGTLLAKLWQ</sequence>
<gene>
    <name evidence="1" type="primary">fluC</name>
    <name evidence="1" type="synonym">crcB</name>
    <name type="ordered locus">CT2102</name>
</gene>
<protein>
    <recommendedName>
        <fullName evidence="1">Fluoride-specific ion channel FluC</fullName>
    </recommendedName>
</protein>